<organism>
    <name type="scientific">Paracoccus denitrificans</name>
    <dbReference type="NCBI Taxonomy" id="266"/>
    <lineage>
        <taxon>Bacteria</taxon>
        <taxon>Pseudomonadati</taxon>
        <taxon>Pseudomonadota</taxon>
        <taxon>Alphaproteobacteria</taxon>
        <taxon>Rhodobacterales</taxon>
        <taxon>Paracoccaceae</taxon>
        <taxon>Paracoccus</taxon>
    </lineage>
</organism>
<accession>Q8VUS8</accession>
<protein>
    <recommendedName>
        <fullName>Quinohemoprotein amine dehydrogenase subunit gamma</fullName>
        <shortName evidence="5">QH-AmDH</shortName>
        <ecNumber evidence="2 7">1.4.2.-</ecNumber>
    </recommendedName>
    <alternativeName>
        <fullName>Quinohemoprotein amine dehydrogenase 9 kDa subunit</fullName>
    </alternativeName>
    <alternativeName>
        <fullName>Quinohemoprotein amine dehydrogenase catalytic subunit</fullName>
    </alternativeName>
</protein>
<sequence>MNALVGCTTSFDPGWEVDAFGAVSNLCQPMEADLYGCADPCWWPAQVADTLNTYPNWSAGADDVMQDWRKLQSVFPETKGSS</sequence>
<gene>
    <name type="primary">qhnDH</name>
</gene>
<feature type="chain" id="PRO_0000220552" description="Quinohemoprotein amine dehydrogenase subunit gamma">
    <location>
        <begin position="1"/>
        <end position="82"/>
    </location>
</feature>
<feature type="active site" description="Proton acceptor" evidence="4 8">
    <location>
        <position position="33"/>
    </location>
</feature>
<feature type="modified residue" description="Tryptophylquinone" evidence="3 4">
    <location>
        <position position="43"/>
    </location>
</feature>
<feature type="cross-link" description="4-cysteinyl-glutamic acid (Cys-Glu)" evidence="3">
    <location>
        <begin position="7"/>
        <end position="16"/>
    </location>
</feature>
<feature type="cross-link" description="3-cysteinyl-aspartic acid (Cys-Asp)" evidence="3">
    <location>
        <begin position="27"/>
        <end position="33"/>
    </location>
</feature>
<feature type="cross-link" description="4'-cysteinyl-tryptophylquinone (Cys-Trp)" evidence="3 4">
    <location>
        <begin position="37"/>
        <end position="43"/>
    </location>
</feature>
<feature type="cross-link" description="3-cysteinyl-aspartic acid (Cys-Asp)" evidence="3">
    <location>
        <begin position="41"/>
        <end position="49"/>
    </location>
</feature>
<feature type="strand" evidence="12">
    <location>
        <begin position="12"/>
        <end position="18"/>
    </location>
</feature>
<feature type="strand" evidence="12">
    <location>
        <begin position="21"/>
        <end position="23"/>
    </location>
</feature>
<feature type="helix" evidence="12">
    <location>
        <begin position="31"/>
        <end position="38"/>
    </location>
</feature>
<feature type="turn" evidence="12">
    <location>
        <begin position="39"/>
        <end position="41"/>
    </location>
</feature>
<feature type="turn" evidence="11">
    <location>
        <begin position="44"/>
        <end position="46"/>
    </location>
</feature>
<feature type="turn" evidence="12">
    <location>
        <begin position="50"/>
        <end position="53"/>
    </location>
</feature>
<feature type="turn" evidence="12">
    <location>
        <begin position="55"/>
        <end position="60"/>
    </location>
</feature>
<feature type="helix" evidence="12">
    <location>
        <begin position="64"/>
        <end position="67"/>
    </location>
</feature>
<feature type="helix" evidence="12">
    <location>
        <begin position="68"/>
        <end position="70"/>
    </location>
</feature>
<dbReference type="EC" id="1.4.2.-" evidence="2 7"/>
<dbReference type="EMBL" id="AB063330">
    <property type="protein sequence ID" value="BAB78728.1"/>
    <property type="status" value="ALT_INIT"/>
    <property type="molecule type" value="Genomic_DNA"/>
</dbReference>
<dbReference type="PDB" id="1JJU">
    <property type="method" value="X-ray"/>
    <property type="resolution" value="2.05 A"/>
    <property type="chains" value="C=1-79"/>
</dbReference>
<dbReference type="PDB" id="1PBY">
    <property type="method" value="X-ray"/>
    <property type="resolution" value="1.70 A"/>
    <property type="chains" value="C=1-79"/>
</dbReference>
<dbReference type="PDBsum" id="1JJU"/>
<dbReference type="PDBsum" id="1PBY"/>
<dbReference type="SMR" id="Q8VUS8"/>
<dbReference type="DrugBank" id="DB08646">
    <property type="generic name" value="TRW3-(2-AMINO-3-HYDROXY-PROPYL)-6-(N'-CYCLOHEXYL-HYDRAZINO)OCTAHYDRO-INDOL-7-OL"/>
</dbReference>
<dbReference type="BioCyc" id="MetaCyc:MONOMER-15728"/>
<dbReference type="SABIO-RK" id="Q8VUS8"/>
<dbReference type="EvolutionaryTrace" id="Q8VUS8"/>
<dbReference type="GO" id="GO:0042597">
    <property type="term" value="C:periplasmic space"/>
    <property type="evidence" value="ECO:0007669"/>
    <property type="project" value="UniProtKB-SubCell"/>
</dbReference>
<dbReference type="GO" id="GO:0016638">
    <property type="term" value="F:oxidoreductase activity, acting on the CH-NH2 group of donors"/>
    <property type="evidence" value="ECO:0007669"/>
    <property type="project" value="InterPro"/>
</dbReference>
<dbReference type="Gene3D" id="4.10.940.10">
    <property type="entry name" value="Quinohemoprotein amine dehydrogenase, gamma subunit structural domain"/>
    <property type="match status" value="1"/>
</dbReference>
<dbReference type="InterPro" id="IPR015084">
    <property type="entry name" value="QH-AmDH_gsu_dom"/>
</dbReference>
<dbReference type="InterPro" id="IPR036487">
    <property type="entry name" value="QH-AmDH_gsu_sf"/>
</dbReference>
<dbReference type="InterPro" id="IPR047830">
    <property type="entry name" value="QHNDH_gamma"/>
</dbReference>
<dbReference type="NCBIfam" id="NF037958">
    <property type="entry name" value="QH_gamma"/>
    <property type="match status" value="1"/>
</dbReference>
<dbReference type="Pfam" id="PF08992">
    <property type="entry name" value="QH-AmDH_gamma"/>
    <property type="match status" value="1"/>
</dbReference>
<dbReference type="SUPFAM" id="SSF69131">
    <property type="entry name" value="Quinohemoprotein amine dehydrogenase C chain"/>
    <property type="match status" value="1"/>
</dbReference>
<reference evidence="9" key="1">
    <citation type="journal article" date="2001" name="Proc. Natl. Acad. Sci. U.S.A.">
        <title>Structure of a quinohemoprotein amine dehydrogenase with an uncommon redox cofactor and highly unusual crosslinking.</title>
        <authorList>
            <person name="Datta S."/>
            <person name="Mori Y."/>
            <person name="Takagi K."/>
            <person name="Kawaguchi K."/>
            <person name="Chen Z.-W."/>
            <person name="Okajima T."/>
            <person name="Kuroda S."/>
            <person name="Ikeda T."/>
            <person name="Kano K."/>
            <person name="Tanizawa K."/>
            <person name="Mathews F.S."/>
        </authorList>
    </citation>
    <scope>NUCLEOTIDE SEQUENCE [GENOMIC DNA]</scope>
    <scope>PROTEIN SEQUENCE OF 36-51</scope>
    <scope>X-RAY CRYSTALLOGRAPHY (2.05 ANGSTROMS) OF 1-79</scope>
    <scope>IDENTIFICATION BY MASS SPECTROMETRY</scope>
    <scope>COFACTOR</scope>
    <scope>SUBUNIT</scope>
    <scope>SUBCELLULAR LOCATION</scope>
    <scope>ACTIVE SITE</scope>
    <source>
        <strain>NBRC 12442</strain>
    </source>
</reference>
<reference key="2">
    <citation type="journal article" date="1999" name="Biochemistry">
        <title>Biochemical and electrochemical characterization of quinohemoprotein amine dehydrogenase from Paracoccus denitrificans.</title>
        <authorList>
            <person name="Takagi K."/>
            <person name="Torimura M."/>
            <person name="Kawaguchi K."/>
            <person name="Kano K."/>
            <person name="Ikeda T."/>
        </authorList>
    </citation>
    <scope>FUNCTION</scope>
    <scope>CATALYTIC ACTIVITY</scope>
    <scope>ACTIVITY REGULATION</scope>
    <scope>SUBCELLULAR LOCATION</scope>
    <scope>INDUCTION</scope>
    <source>
        <strain>NBRC 12442</strain>
    </source>
</reference>
<reference key="3">
    <citation type="journal article" date="2001" name="Eur. J. Biochem.">
        <title>New pathway of amine oxidation respiratory chain of Paracoccus denitrificans IFO 12442.</title>
        <authorList>
            <person name="Takagi K."/>
            <person name="Yamamoto K."/>
            <person name="Kano K."/>
            <person name="Ikeda T."/>
        </authorList>
    </citation>
    <scope>FUNCTION</scope>
    <scope>CATALYTIC ACTIVITY</scope>
    <scope>SUBCELLULAR LOCATION</scope>
    <source>
        <strain>NBRC 12442</strain>
    </source>
</reference>
<reference evidence="10" key="4">
    <citation type="journal article" date="2003" name="Acta Crystallogr. D">
        <title>Structure of the phenylhydrazine adduct of the quinohemoprotein amine dehydrogenase from Paracoccus denitrificans at 1.7 A resolution.</title>
        <authorList>
            <person name="Datta S."/>
            <person name="Ikeda T."/>
            <person name="Kano K."/>
            <person name="Mathews F.S."/>
        </authorList>
    </citation>
    <scope>X-RAY CRYSTALLOGRAPHY (1.70 ANGSTROMS) OF 1-79 IN COMPLEX WITH THE INHIBITOR PHENYLHYDRAZINE</scope>
    <scope>COFACTOR</scope>
    <scope>ACTIVITY REGULATION</scope>
    <scope>SUBUNIT</scope>
    <scope>ACTIVE SITE</scope>
</reference>
<proteinExistence type="evidence at protein level"/>
<keyword id="KW-0002">3D-structure</keyword>
<keyword id="KW-0885">CTQ</keyword>
<keyword id="KW-0903">Direct protein sequencing</keyword>
<keyword id="KW-0249">Electron transport</keyword>
<keyword id="KW-0560">Oxidoreductase</keyword>
<keyword id="KW-0574">Periplasm</keyword>
<keyword id="KW-0883">Thioether bond</keyword>
<keyword id="KW-0813">Transport</keyword>
<name>QADG_PARDE</name>
<evidence type="ECO:0000269" key="1">
    <source>
    </source>
</evidence>
<evidence type="ECO:0000269" key="2">
    <source>
    </source>
</evidence>
<evidence type="ECO:0000269" key="3">
    <source>
    </source>
</evidence>
<evidence type="ECO:0000269" key="4">
    <source>
    </source>
</evidence>
<evidence type="ECO:0000303" key="5">
    <source>
    </source>
</evidence>
<evidence type="ECO:0000305" key="6"/>
<evidence type="ECO:0000305" key="7">
    <source>
    </source>
</evidence>
<evidence type="ECO:0000305" key="8">
    <source>
    </source>
</evidence>
<evidence type="ECO:0007744" key="9">
    <source>
        <dbReference type="PDB" id="1JJU"/>
    </source>
</evidence>
<evidence type="ECO:0007744" key="10">
    <source>
        <dbReference type="PDB" id="1PBY"/>
    </source>
</evidence>
<evidence type="ECO:0007829" key="11">
    <source>
        <dbReference type="PDB" id="1JJU"/>
    </source>
</evidence>
<evidence type="ECO:0007829" key="12">
    <source>
        <dbReference type="PDB" id="1PBY"/>
    </source>
</evidence>
<comment type="function">
    <text evidence="1 2">Catalyzes the oxidative deamination of a wide range of primary aliphatic and aromatic amines (PubMed:10346915). The physiological electron acceptor is the constitutive cytochrome c550 (PubMed:11168384).</text>
</comment>
<comment type="catalytic activity">
    <reaction evidence="2 7">
        <text>2 Fe(III)-[cytochrome c550] + an aliphatic amine + H2O = 2 Fe(II)-[cytochrome c550] + an aldehyde + NH4(+) + 2 H(+)</text>
        <dbReference type="Rhea" id="RHEA:21916"/>
        <dbReference type="Rhea" id="RHEA-COMP:11209"/>
        <dbReference type="Rhea" id="RHEA-COMP:11210"/>
        <dbReference type="ChEBI" id="CHEBI:15377"/>
        <dbReference type="ChEBI" id="CHEBI:15378"/>
        <dbReference type="ChEBI" id="CHEBI:17478"/>
        <dbReference type="ChEBI" id="CHEBI:28938"/>
        <dbReference type="ChEBI" id="CHEBI:29033"/>
        <dbReference type="ChEBI" id="CHEBI:29034"/>
        <dbReference type="ChEBI" id="CHEBI:58001"/>
    </reaction>
    <physiologicalReaction direction="left-to-right" evidence="2 7">
        <dbReference type="Rhea" id="RHEA:21917"/>
    </physiologicalReaction>
</comment>
<comment type="cofactor">
    <cofactor evidence="3 4">
        <name>cysteine tryptophylquinone residue</name>
        <dbReference type="ChEBI" id="CHEBI:20252"/>
    </cofactor>
    <text evidence="3 4">Contains 1 cysteine tryptophylquinone per subunit.</text>
</comment>
<comment type="activity regulation">
    <text evidence="1 4">Inhibited by carbonyl reagents such as hydrazine, hydroxylamine, phenylhydrazine and semicarbazide.</text>
</comment>
<comment type="subunit">
    <text evidence="3 4">Heterotrimer of an alpha, a beta and a gamma subunit.</text>
</comment>
<comment type="subcellular location">
    <subcellularLocation>
        <location evidence="1 2">Periplasm</location>
    </subcellularLocation>
    <text evidence="8">Is probably co-translocated into the periplasm when associated with the alpha and/or beta subunit, which contain both a signal peptide.</text>
</comment>
<comment type="induction">
    <text evidence="1">Induced by growth on methylamine, n-butylamine or benzylamine.</text>
</comment>
<comment type="PTM">
    <text evidence="3 4">The cysteine tryptophylquinone (CTQ) is generated by oxidation of the indole ring of a tryptophan residue to form tryptophylquinone, followed by covalent cross-linking with a cysteine residue.</text>
</comment>
<comment type="similarity">
    <text evidence="6">Belongs to the quinohemoprotein amine dehydrogenase subunit gamma family.</text>
</comment>
<comment type="sequence caution" evidence="6">
    <conflict type="erroneous initiation">
        <sequence resource="EMBL-CDS" id="BAB78728"/>
    </conflict>
    <text>Extended N-terminus.</text>
</comment>